<comment type="similarity">
    <text evidence="1">Belongs to the eukaryotic ribosomal protein eS28 family.</text>
</comment>
<keyword id="KW-0687">Ribonucleoprotein</keyword>
<keyword id="KW-0689">Ribosomal protein</keyword>
<name>RS28_THEVO</name>
<organism>
    <name type="scientific">Thermoplasma volcanium (strain ATCC 51530 / DSM 4299 / JCM 9571 / NBRC 15438 / GSS1)</name>
    <dbReference type="NCBI Taxonomy" id="273116"/>
    <lineage>
        <taxon>Archaea</taxon>
        <taxon>Methanobacteriati</taxon>
        <taxon>Thermoplasmatota</taxon>
        <taxon>Thermoplasmata</taxon>
        <taxon>Thermoplasmatales</taxon>
        <taxon>Thermoplasmataceae</taxon>
        <taxon>Thermoplasma</taxon>
    </lineage>
</organism>
<reference key="1">
    <citation type="journal article" date="2000" name="Proc. Natl. Acad. Sci. U.S.A.">
        <title>Archaeal adaptation to higher temperatures revealed by genomic sequence of Thermoplasma volcanium.</title>
        <authorList>
            <person name="Kawashima T."/>
            <person name="Amano N."/>
            <person name="Koike H."/>
            <person name="Makino S."/>
            <person name="Higuchi S."/>
            <person name="Kawashima-Ohya Y."/>
            <person name="Watanabe K."/>
            <person name="Yamazaki M."/>
            <person name="Kanehori K."/>
            <person name="Kawamoto T."/>
            <person name="Nunoshiba T."/>
            <person name="Yamamoto Y."/>
            <person name="Aramaki H."/>
            <person name="Makino K."/>
            <person name="Suzuki M."/>
        </authorList>
    </citation>
    <scope>NUCLEOTIDE SEQUENCE [LARGE SCALE GENOMIC DNA]</scope>
    <source>
        <strain>ATCC 51530 / DSM 4299 / JCM 9571 / NBRC 15438 / GSS1</strain>
    </source>
</reference>
<evidence type="ECO:0000255" key="1">
    <source>
        <dbReference type="HAMAP-Rule" id="MF_00292"/>
    </source>
</evidence>
<evidence type="ECO:0000305" key="2"/>
<sequence length="69" mass="7488">MPNEATPAEVVEIIGRTGMTGEATTVKVRILSGRDQGRIIARNVLGPVRVGDILMLMETAREAKKLSIR</sequence>
<protein>
    <recommendedName>
        <fullName evidence="1">Small ribosomal subunit protein eS28</fullName>
    </recommendedName>
    <alternativeName>
        <fullName evidence="2">30S ribosomal protein S28e</fullName>
    </alternativeName>
</protein>
<proteinExistence type="inferred from homology"/>
<dbReference type="EMBL" id="BA000011">
    <property type="protein sequence ID" value="BAB59590.1"/>
    <property type="molecule type" value="Genomic_DNA"/>
</dbReference>
<dbReference type="RefSeq" id="WP_010916708.1">
    <property type="nucleotide sequence ID" value="NC_002689.2"/>
</dbReference>
<dbReference type="SMR" id="Q97BK7"/>
<dbReference type="STRING" id="273116.gene:9381229"/>
<dbReference type="PaxDb" id="273116-14324663"/>
<dbReference type="GeneID" id="1440966"/>
<dbReference type="KEGG" id="tvo:TVG0437776"/>
<dbReference type="eggNOG" id="arCOG04314">
    <property type="taxonomic scope" value="Archaea"/>
</dbReference>
<dbReference type="HOGENOM" id="CLU_178987_2_1_2"/>
<dbReference type="OrthoDB" id="7620at2157"/>
<dbReference type="PhylomeDB" id="Q97BK7"/>
<dbReference type="Proteomes" id="UP000001017">
    <property type="component" value="Chromosome"/>
</dbReference>
<dbReference type="GO" id="GO:0022627">
    <property type="term" value="C:cytosolic small ribosomal subunit"/>
    <property type="evidence" value="ECO:0007669"/>
    <property type="project" value="TreeGrafter"/>
</dbReference>
<dbReference type="GO" id="GO:0003735">
    <property type="term" value="F:structural constituent of ribosome"/>
    <property type="evidence" value="ECO:0007669"/>
    <property type="project" value="InterPro"/>
</dbReference>
<dbReference type="GO" id="GO:0030490">
    <property type="term" value="P:maturation of SSU-rRNA"/>
    <property type="evidence" value="ECO:0007669"/>
    <property type="project" value="TreeGrafter"/>
</dbReference>
<dbReference type="GO" id="GO:0000028">
    <property type="term" value="P:ribosomal small subunit assembly"/>
    <property type="evidence" value="ECO:0007669"/>
    <property type="project" value="TreeGrafter"/>
</dbReference>
<dbReference type="GO" id="GO:0006412">
    <property type="term" value="P:translation"/>
    <property type="evidence" value="ECO:0007669"/>
    <property type="project" value="UniProtKB-UniRule"/>
</dbReference>
<dbReference type="CDD" id="cd04457">
    <property type="entry name" value="S1_S28E"/>
    <property type="match status" value="1"/>
</dbReference>
<dbReference type="FunFam" id="2.40.50.140:FF:000145">
    <property type="entry name" value="30S ribosomal protein S28e"/>
    <property type="match status" value="1"/>
</dbReference>
<dbReference type="Gene3D" id="2.40.50.140">
    <property type="entry name" value="Nucleic acid-binding proteins"/>
    <property type="match status" value="1"/>
</dbReference>
<dbReference type="HAMAP" id="MF_00292">
    <property type="entry name" value="Ribosomal_eS28"/>
    <property type="match status" value="1"/>
</dbReference>
<dbReference type="InterPro" id="IPR012340">
    <property type="entry name" value="NA-bd_OB-fold"/>
</dbReference>
<dbReference type="InterPro" id="IPR000289">
    <property type="entry name" value="Ribosomal_eS28"/>
</dbReference>
<dbReference type="InterPro" id="IPR028626">
    <property type="entry name" value="Ribosomal_eS28_CS"/>
</dbReference>
<dbReference type="NCBIfam" id="NF003080">
    <property type="entry name" value="PRK04007.1"/>
    <property type="match status" value="1"/>
</dbReference>
<dbReference type="PANTHER" id="PTHR10769">
    <property type="entry name" value="40S RIBOSOMAL PROTEIN S28"/>
    <property type="match status" value="1"/>
</dbReference>
<dbReference type="PANTHER" id="PTHR10769:SF3">
    <property type="entry name" value="SMALL RIBOSOMAL SUBUNIT PROTEIN ES28"/>
    <property type="match status" value="1"/>
</dbReference>
<dbReference type="Pfam" id="PF01200">
    <property type="entry name" value="Ribosomal_S28e"/>
    <property type="match status" value="1"/>
</dbReference>
<dbReference type="SUPFAM" id="SSF50249">
    <property type="entry name" value="Nucleic acid-binding proteins"/>
    <property type="match status" value="1"/>
</dbReference>
<dbReference type="PROSITE" id="PS00961">
    <property type="entry name" value="RIBOSOMAL_S28E"/>
    <property type="match status" value="1"/>
</dbReference>
<feature type="chain" id="PRO_0000136864" description="Small ribosomal subunit protein eS28">
    <location>
        <begin position="1"/>
        <end position="69"/>
    </location>
</feature>
<accession>Q97BK7</accession>
<gene>
    <name evidence="1" type="primary">rps28e</name>
    <name type="ordered locus">TV0448</name>
    <name type="ORF">TVG0437776</name>
</gene>